<proteinExistence type="evidence at protein level"/>
<feature type="chain" id="PRO_0000154935" description="G protein-activated inward rectifier potassium channel 4">
    <location>
        <begin position="1"/>
        <end position="419"/>
    </location>
</feature>
<feature type="topological domain" description="Cytoplasmic" evidence="1">
    <location>
        <begin position="1"/>
        <end position="86"/>
    </location>
</feature>
<feature type="transmembrane region" description="Helical; Name=M1" evidence="1">
    <location>
        <begin position="87"/>
        <end position="111"/>
    </location>
</feature>
<feature type="topological domain" description="Extracellular" evidence="1">
    <location>
        <begin position="112"/>
        <end position="135"/>
    </location>
</feature>
<feature type="intramembrane region" description="Helical; Pore-forming; Name=H5" evidence="1">
    <location>
        <begin position="136"/>
        <end position="147"/>
    </location>
</feature>
<feature type="intramembrane region" description="Pore-forming" evidence="1">
    <location>
        <begin position="148"/>
        <end position="154"/>
    </location>
</feature>
<feature type="topological domain" description="Extracellular" evidence="1">
    <location>
        <begin position="155"/>
        <end position="163"/>
    </location>
</feature>
<feature type="transmembrane region" description="Helical; Name=M2" evidence="1">
    <location>
        <begin position="164"/>
        <end position="185"/>
    </location>
</feature>
<feature type="topological domain" description="Cytoplasmic" evidence="1">
    <location>
        <begin position="186"/>
        <end position="419"/>
    </location>
</feature>
<feature type="region of interest" description="Disordered" evidence="6">
    <location>
        <begin position="388"/>
        <end position="419"/>
    </location>
</feature>
<feature type="short sequence motif" description="Selectivity filter" evidence="1">
    <location>
        <begin position="149"/>
        <end position="154"/>
    </location>
</feature>
<feature type="compositionally biased region" description="Acidic residues" evidence="6">
    <location>
        <begin position="394"/>
        <end position="405"/>
    </location>
</feature>
<feature type="compositionally biased region" description="Polar residues" evidence="6">
    <location>
        <begin position="409"/>
        <end position="419"/>
    </location>
</feature>
<feature type="site" description="Role in the control of polyamine-mediated channel gating and in the blocking by intracellular magnesium" evidence="1">
    <location>
        <position position="179"/>
    </location>
</feature>
<feature type="modified residue" description="Phosphoserine" evidence="2">
    <location>
        <position position="5"/>
    </location>
</feature>
<feature type="sequence conflict" description="In Ref. 1; AAB01687." evidence="9" ref="1">
    <original>L</original>
    <variation>V</variation>
    <location>
        <position position="102"/>
    </location>
</feature>
<feature type="sequence conflict" description="In Ref. 1; AAB01687." evidence="9" ref="1">
    <original>W</original>
    <variation>G</variation>
    <location>
        <position position="109"/>
    </location>
</feature>
<feature type="sequence conflict" description="In Ref. 2; AAC53116." evidence="9" ref="2">
    <original>A</original>
    <variation>P</variation>
    <location>
        <position position="172"/>
    </location>
</feature>
<feature type="sequence conflict" description="In Ref. 1; AAB01687." evidence="9" ref="1">
    <original>P</original>
    <variation>S</variation>
    <location>
        <position position="193"/>
    </location>
</feature>
<feature type="sequence conflict" description="In Ref. 2; AAC53116." evidence="9" ref="2">
    <original>K</original>
    <variation>N</variation>
    <location>
        <position position="214"/>
    </location>
</feature>
<feature type="sequence conflict" description="In Ref. 1; AAB01687." evidence="9" ref="1">
    <original>A</original>
    <variation>V</variation>
    <location>
        <position position="232"/>
    </location>
</feature>
<feature type="sequence conflict" description="In Ref. 1; AAB01687." evidence="9" ref="1">
    <original>F</original>
    <variation>L</variation>
    <location>
        <position position="269"/>
    </location>
</feature>
<feature type="sequence conflict" description="In Ref. 1; AAB01687." evidence="9" ref="1">
    <original>W</original>
    <variation>V</variation>
    <location>
        <position position="287"/>
    </location>
</feature>
<feature type="sequence conflict" description="In Ref. 2; AAC53116." evidence="9" ref="2">
    <original>Q</original>
    <variation>P</variation>
    <location>
        <position position="296"/>
    </location>
</feature>
<feature type="sequence conflict" description="In Ref. 2; AAC53116." evidence="9" ref="2">
    <original>F</original>
    <variation>S</variation>
    <location>
        <position position="351"/>
    </location>
</feature>
<gene>
    <name type="primary">Kcnj5</name>
    <name type="synonym">Girk4</name>
</gene>
<evidence type="ECO:0000250" key="1"/>
<evidence type="ECO:0000250" key="2">
    <source>
        <dbReference type="UniProtKB" id="P48542"/>
    </source>
</evidence>
<evidence type="ECO:0000250" key="3">
    <source>
        <dbReference type="UniProtKB" id="P48544"/>
    </source>
</evidence>
<evidence type="ECO:0000250" key="4">
    <source>
        <dbReference type="UniProtKB" id="P48548"/>
    </source>
</evidence>
<evidence type="ECO:0000255" key="5"/>
<evidence type="ECO:0000256" key="6">
    <source>
        <dbReference type="SAM" id="MobiDB-lite"/>
    </source>
</evidence>
<evidence type="ECO:0000269" key="7">
    <source>
    </source>
</evidence>
<evidence type="ECO:0000269" key="8">
    <source>
    </source>
</evidence>
<evidence type="ECO:0000305" key="9"/>
<comment type="function">
    <text evidence="3 7">Inward rectifier potassium channels are characterized by a greater tendency to allow potassium to flow into the cell rather than out of it. Their voltage dependence is regulated by the concentration of extracellular potassium; as external potassium is raised, the voltage range of the channel opening shifts to more positive voltages. The inward rectification is mainly due to the blockage of outward current by internal magnesium. Can be blocked by external barium. This potassium channel is controlled by G proteins (By similarity). Forms a functional channel in association with KCNJ3/GIRK1 (PubMed:10341034).</text>
</comment>
<comment type="catalytic activity">
    <reaction evidence="3">
        <text>K(+)(in) = K(+)(out)</text>
        <dbReference type="Rhea" id="RHEA:29463"/>
        <dbReference type="ChEBI" id="CHEBI:29103"/>
    </reaction>
</comment>
<comment type="activity regulation">
    <text evidence="4">Heteromultimer composed of KCNJ3/GIRK1 and KCNJ5/GIRK4 is activated by phosphatidylinositol 4,5 biphosphate (PtdIns(4,5)P2).</text>
</comment>
<comment type="subunit">
    <text evidence="7 8">Associates with KCNJ3/GIRK1 to form a G-protein-activated heteromultimer pore-forming unit (PubMed:10341034). Associates with KCNJ6/GRIK2 to form a G-protein-activated heteromultimer pore-forming unit (PubMed:7499385).</text>
</comment>
<comment type="subcellular location">
    <subcellularLocation>
        <location evidence="3">Membrane</location>
        <topology evidence="5">Multi-pass membrane protein</topology>
    </subcellularLocation>
</comment>
<comment type="tissue specificity">
    <text evidence="8">Expressed in the heart.</text>
</comment>
<comment type="similarity">
    <text evidence="9">Belongs to the inward rectifier-type potassium channel (TC 1.A.2.1) family. KCNJ5 subfamily.</text>
</comment>
<organism>
    <name type="scientific">Mus musculus</name>
    <name type="common">Mouse</name>
    <dbReference type="NCBI Taxonomy" id="10090"/>
    <lineage>
        <taxon>Eukaryota</taxon>
        <taxon>Metazoa</taxon>
        <taxon>Chordata</taxon>
        <taxon>Craniata</taxon>
        <taxon>Vertebrata</taxon>
        <taxon>Euteleostomi</taxon>
        <taxon>Mammalia</taxon>
        <taxon>Eutheria</taxon>
        <taxon>Euarchontoglires</taxon>
        <taxon>Glires</taxon>
        <taxon>Rodentia</taxon>
        <taxon>Myomorpha</taxon>
        <taxon>Muroidea</taxon>
        <taxon>Muridae</taxon>
        <taxon>Murinae</taxon>
        <taxon>Mus</taxon>
        <taxon>Mus</taxon>
    </lineage>
</organism>
<sequence>MAGDSRNAMNQDMEIGVTSQDHKKIPKQARDYIPIATDRTRLLTEGKKPRQRYMEKTGKCNVHHGNVQETYRYLSDLFTTLVDLKWRFNLLVFTMVYTITWLFFGFIWWLIAYVRGDLDHVGDQEWIPCVENLSGFVSAFLFSIETETTIGYGFRVITEKCPEGIILLLVQAILGSIVNAFMVGCMFVKISQPKKRAETLMFSNNAVISMRDEKLCLMFRVGDLRNSHIVEASIRAKLIKSRQTKEGEFIPLNQTDINVGFDTGDDRLFLVSPLIISHEINEKSPFWEMSRAQLEQEEFEVVVILEGMVEATGMTCQARSSYMDTEVLWGHRFTPVLTLEKGFYEVDYNTFHDTYETNTPSCCAKELAEMKRSGRLLQYLPSPPLLGGCAEAGNEAEAEKDEEGEPNGLSVSQATRGSM</sequence>
<protein>
    <recommendedName>
        <fullName>G protein-activated inward rectifier potassium channel 4</fullName>
        <shortName>GIRK-4</shortName>
    </recommendedName>
    <alternativeName>
        <fullName>Cardiac inward rectifier</fullName>
        <shortName>CIR</shortName>
    </alternativeName>
    <alternativeName>
        <fullName>Heart KATP channel</fullName>
    </alternativeName>
    <alternativeName>
        <fullName>Inward rectifier K(+) channel Kir3.4</fullName>
    </alternativeName>
    <alternativeName>
        <fullName>KATP-1</fullName>
    </alternativeName>
    <alternativeName>
        <fullName>Potassium channel, inwardly rectifying subfamily J member 5</fullName>
    </alternativeName>
</protein>
<name>KCNJ5_MOUSE</name>
<accession>P48545</accession>
<accession>P97508</accession>
<accession>Q3TPX9</accession>
<reference key="1">
    <citation type="journal article" date="1995" name="J. Biol. Chem.">
        <title>Molecular properties of neuronal G-protein-activated inwardly rectifying K+ channels.</title>
        <authorList>
            <person name="Lesage F."/>
            <person name="Guillemare E."/>
            <person name="Fink M."/>
            <person name="Duprat F."/>
            <person name="Heurteaux C."/>
            <person name="Fosset M."/>
            <person name="Romey G."/>
            <person name="Barhanin J."/>
            <person name="Lazdunski M."/>
        </authorList>
    </citation>
    <scope>NUCLEOTIDE SEQUENCE [MRNA]</scope>
    <scope>SUBUNIT</scope>
    <scope>TISSUE SPECIFICITY</scope>
    <source>
        <tissue>Heart</tissue>
    </source>
</reference>
<reference key="2">
    <citation type="submission" date="1997-02" db="EMBL/GenBank/DDBJ databases">
        <authorList>
            <person name="Wickman K.D."/>
            <person name="James M.R."/>
            <person name="Seldin M.F."/>
            <person name="Gendler S.J."/>
            <person name="Clapham D.E."/>
        </authorList>
    </citation>
    <scope>NUCLEOTIDE SEQUENCE [GENOMIC DNA]</scope>
    <source>
        <strain>129/SvJ</strain>
    </source>
</reference>
<reference key="3">
    <citation type="journal article" date="2005" name="Science">
        <title>The transcriptional landscape of the mammalian genome.</title>
        <authorList>
            <person name="Carninci P."/>
            <person name="Kasukawa T."/>
            <person name="Katayama S."/>
            <person name="Gough J."/>
            <person name="Frith M.C."/>
            <person name="Maeda N."/>
            <person name="Oyama R."/>
            <person name="Ravasi T."/>
            <person name="Lenhard B."/>
            <person name="Wells C."/>
            <person name="Kodzius R."/>
            <person name="Shimokawa K."/>
            <person name="Bajic V.B."/>
            <person name="Brenner S.E."/>
            <person name="Batalov S."/>
            <person name="Forrest A.R."/>
            <person name="Zavolan M."/>
            <person name="Davis M.J."/>
            <person name="Wilming L.G."/>
            <person name="Aidinis V."/>
            <person name="Allen J.E."/>
            <person name="Ambesi-Impiombato A."/>
            <person name="Apweiler R."/>
            <person name="Aturaliya R.N."/>
            <person name="Bailey T.L."/>
            <person name="Bansal M."/>
            <person name="Baxter L."/>
            <person name="Beisel K.W."/>
            <person name="Bersano T."/>
            <person name="Bono H."/>
            <person name="Chalk A.M."/>
            <person name="Chiu K.P."/>
            <person name="Choudhary V."/>
            <person name="Christoffels A."/>
            <person name="Clutterbuck D.R."/>
            <person name="Crowe M.L."/>
            <person name="Dalla E."/>
            <person name="Dalrymple B.P."/>
            <person name="de Bono B."/>
            <person name="Della Gatta G."/>
            <person name="di Bernardo D."/>
            <person name="Down T."/>
            <person name="Engstrom P."/>
            <person name="Fagiolini M."/>
            <person name="Faulkner G."/>
            <person name="Fletcher C.F."/>
            <person name="Fukushima T."/>
            <person name="Furuno M."/>
            <person name="Futaki S."/>
            <person name="Gariboldi M."/>
            <person name="Georgii-Hemming P."/>
            <person name="Gingeras T.R."/>
            <person name="Gojobori T."/>
            <person name="Green R.E."/>
            <person name="Gustincich S."/>
            <person name="Harbers M."/>
            <person name="Hayashi Y."/>
            <person name="Hensch T.K."/>
            <person name="Hirokawa N."/>
            <person name="Hill D."/>
            <person name="Huminiecki L."/>
            <person name="Iacono M."/>
            <person name="Ikeo K."/>
            <person name="Iwama A."/>
            <person name="Ishikawa T."/>
            <person name="Jakt M."/>
            <person name="Kanapin A."/>
            <person name="Katoh M."/>
            <person name="Kawasawa Y."/>
            <person name="Kelso J."/>
            <person name="Kitamura H."/>
            <person name="Kitano H."/>
            <person name="Kollias G."/>
            <person name="Krishnan S.P."/>
            <person name="Kruger A."/>
            <person name="Kummerfeld S.K."/>
            <person name="Kurochkin I.V."/>
            <person name="Lareau L.F."/>
            <person name="Lazarevic D."/>
            <person name="Lipovich L."/>
            <person name="Liu J."/>
            <person name="Liuni S."/>
            <person name="McWilliam S."/>
            <person name="Madan Babu M."/>
            <person name="Madera M."/>
            <person name="Marchionni L."/>
            <person name="Matsuda H."/>
            <person name="Matsuzawa S."/>
            <person name="Miki H."/>
            <person name="Mignone F."/>
            <person name="Miyake S."/>
            <person name="Morris K."/>
            <person name="Mottagui-Tabar S."/>
            <person name="Mulder N."/>
            <person name="Nakano N."/>
            <person name="Nakauchi H."/>
            <person name="Ng P."/>
            <person name="Nilsson R."/>
            <person name="Nishiguchi S."/>
            <person name="Nishikawa S."/>
            <person name="Nori F."/>
            <person name="Ohara O."/>
            <person name="Okazaki Y."/>
            <person name="Orlando V."/>
            <person name="Pang K.C."/>
            <person name="Pavan W.J."/>
            <person name="Pavesi G."/>
            <person name="Pesole G."/>
            <person name="Petrovsky N."/>
            <person name="Piazza S."/>
            <person name="Reed J."/>
            <person name="Reid J.F."/>
            <person name="Ring B.Z."/>
            <person name="Ringwald M."/>
            <person name="Rost B."/>
            <person name="Ruan Y."/>
            <person name="Salzberg S.L."/>
            <person name="Sandelin A."/>
            <person name="Schneider C."/>
            <person name="Schoenbach C."/>
            <person name="Sekiguchi K."/>
            <person name="Semple C.A."/>
            <person name="Seno S."/>
            <person name="Sessa L."/>
            <person name="Sheng Y."/>
            <person name="Shibata Y."/>
            <person name="Shimada H."/>
            <person name="Shimada K."/>
            <person name="Silva D."/>
            <person name="Sinclair B."/>
            <person name="Sperling S."/>
            <person name="Stupka E."/>
            <person name="Sugiura K."/>
            <person name="Sultana R."/>
            <person name="Takenaka Y."/>
            <person name="Taki K."/>
            <person name="Tammoja K."/>
            <person name="Tan S.L."/>
            <person name="Tang S."/>
            <person name="Taylor M.S."/>
            <person name="Tegner J."/>
            <person name="Teichmann S.A."/>
            <person name="Ueda H.R."/>
            <person name="van Nimwegen E."/>
            <person name="Verardo R."/>
            <person name="Wei C.L."/>
            <person name="Yagi K."/>
            <person name="Yamanishi H."/>
            <person name="Zabarovsky E."/>
            <person name="Zhu S."/>
            <person name="Zimmer A."/>
            <person name="Hide W."/>
            <person name="Bult C."/>
            <person name="Grimmond S.M."/>
            <person name="Teasdale R.D."/>
            <person name="Liu E.T."/>
            <person name="Brusic V."/>
            <person name="Quackenbush J."/>
            <person name="Wahlestedt C."/>
            <person name="Mattick J.S."/>
            <person name="Hume D.A."/>
            <person name="Kai C."/>
            <person name="Sasaki D."/>
            <person name="Tomaru Y."/>
            <person name="Fukuda S."/>
            <person name="Kanamori-Katayama M."/>
            <person name="Suzuki M."/>
            <person name="Aoki J."/>
            <person name="Arakawa T."/>
            <person name="Iida J."/>
            <person name="Imamura K."/>
            <person name="Itoh M."/>
            <person name="Kato T."/>
            <person name="Kawaji H."/>
            <person name="Kawagashira N."/>
            <person name="Kawashima T."/>
            <person name="Kojima M."/>
            <person name="Kondo S."/>
            <person name="Konno H."/>
            <person name="Nakano K."/>
            <person name="Ninomiya N."/>
            <person name="Nishio T."/>
            <person name="Okada M."/>
            <person name="Plessy C."/>
            <person name="Shibata K."/>
            <person name="Shiraki T."/>
            <person name="Suzuki S."/>
            <person name="Tagami M."/>
            <person name="Waki K."/>
            <person name="Watahiki A."/>
            <person name="Okamura-Oho Y."/>
            <person name="Suzuki H."/>
            <person name="Kawai J."/>
            <person name="Hayashizaki Y."/>
        </authorList>
    </citation>
    <scope>NUCLEOTIDE SEQUENCE [LARGE SCALE MRNA]</scope>
    <source>
        <strain>C57BL/6J</strain>
        <tissue>Embryo</tissue>
    </source>
</reference>
<reference key="4">
    <citation type="submission" date="2005-07" db="EMBL/GenBank/DDBJ databases">
        <authorList>
            <person name="Mural R.J."/>
            <person name="Adams M.D."/>
            <person name="Myers E.W."/>
            <person name="Smith H.O."/>
            <person name="Venter J.C."/>
        </authorList>
    </citation>
    <scope>NUCLEOTIDE SEQUENCE [LARGE SCALE GENOMIC DNA]</scope>
</reference>
<reference key="5">
    <citation type="journal article" date="1999" name="J. Membr. Biol.">
        <title>Functional expression and characterization of G-protein-gated inwardly rectifying K+ channels containing GIRK3.</title>
        <authorList>
            <person name="Jelacic T.M."/>
            <person name="Sims S.M."/>
            <person name="Clapham D.E."/>
        </authorList>
    </citation>
    <scope>FUNCTION</scope>
    <scope>SUBUNIT</scope>
</reference>
<dbReference type="EMBL" id="U33631">
    <property type="protein sequence ID" value="AAB01687.1"/>
    <property type="molecule type" value="mRNA"/>
</dbReference>
<dbReference type="EMBL" id="AF403131">
    <property type="protein sequence ID" value="AAC53116.1"/>
    <property type="molecule type" value="Genomic_DNA"/>
</dbReference>
<dbReference type="EMBL" id="AK164058">
    <property type="protein sequence ID" value="BAE37606.1"/>
    <property type="molecule type" value="mRNA"/>
</dbReference>
<dbReference type="EMBL" id="CH466522">
    <property type="protein sequence ID" value="EDL25354.1"/>
    <property type="molecule type" value="Genomic_DNA"/>
</dbReference>
<dbReference type="CCDS" id="CCDS22952.1"/>
<dbReference type="RefSeq" id="NP_001398762.1">
    <property type="nucleotide sequence ID" value="NM_001411833.1"/>
</dbReference>
<dbReference type="RefSeq" id="NP_001398763.1">
    <property type="nucleotide sequence ID" value="NM_001411834.1"/>
</dbReference>
<dbReference type="RefSeq" id="NP_001398764.1">
    <property type="nucleotide sequence ID" value="NM_001411835.1"/>
</dbReference>
<dbReference type="RefSeq" id="NP_034735.3">
    <property type="nucleotide sequence ID" value="NM_010605.4"/>
</dbReference>
<dbReference type="RefSeq" id="XP_006510102.1">
    <property type="nucleotide sequence ID" value="XM_006510039.3"/>
</dbReference>
<dbReference type="RefSeq" id="XP_017168644.1">
    <property type="nucleotide sequence ID" value="XM_017313155.1"/>
</dbReference>
<dbReference type="SMR" id="P48545"/>
<dbReference type="BioGRID" id="200903">
    <property type="interactions" value="2"/>
</dbReference>
<dbReference type="ComplexPortal" id="CPX-3277">
    <property type="entry name" value="I(KACh) inward rectifier potassium channel complex"/>
</dbReference>
<dbReference type="CORUM" id="P48545"/>
<dbReference type="FunCoup" id="P48545">
    <property type="interactions" value="289"/>
</dbReference>
<dbReference type="STRING" id="10090.ENSMUSP00000034533"/>
<dbReference type="DrugCentral" id="P48545"/>
<dbReference type="GuidetoPHARMACOLOGY" id="437"/>
<dbReference type="iPTMnet" id="P48545"/>
<dbReference type="PhosphoSitePlus" id="P48545"/>
<dbReference type="PaxDb" id="10090-ENSMUSP00000034533"/>
<dbReference type="ProteomicsDB" id="263497"/>
<dbReference type="Antibodypedia" id="2997">
    <property type="antibodies" value="208 antibodies from 29 providers"/>
</dbReference>
<dbReference type="DNASU" id="16521"/>
<dbReference type="Ensembl" id="ENSMUST00000034533.7">
    <property type="protein sequence ID" value="ENSMUSP00000034533.6"/>
    <property type="gene ID" value="ENSMUSG00000032034.7"/>
</dbReference>
<dbReference type="Ensembl" id="ENSMUST00000214223.2">
    <property type="protein sequence ID" value="ENSMUSP00000149000.2"/>
    <property type="gene ID" value="ENSMUSG00000032034.7"/>
</dbReference>
<dbReference type="GeneID" id="16521"/>
<dbReference type="KEGG" id="mmu:16521"/>
<dbReference type="UCSC" id="uc009orw.1">
    <property type="organism name" value="mouse"/>
</dbReference>
<dbReference type="AGR" id="MGI:104755"/>
<dbReference type="CTD" id="3762"/>
<dbReference type="MGI" id="MGI:104755">
    <property type="gene designation" value="Kcnj5"/>
</dbReference>
<dbReference type="VEuPathDB" id="HostDB:ENSMUSG00000032034"/>
<dbReference type="eggNOG" id="KOG3827">
    <property type="taxonomic scope" value="Eukaryota"/>
</dbReference>
<dbReference type="GeneTree" id="ENSGT01080000257365"/>
<dbReference type="HOGENOM" id="CLU_022738_11_0_1"/>
<dbReference type="InParanoid" id="P48545"/>
<dbReference type="OMA" id="ISMRDDK"/>
<dbReference type="OrthoDB" id="273257at2759"/>
<dbReference type="PhylomeDB" id="P48545"/>
<dbReference type="TreeFam" id="TF313676"/>
<dbReference type="Reactome" id="R-MMU-1296041">
    <property type="pathway name" value="Activation of G protein gated Potassium channels"/>
</dbReference>
<dbReference type="Reactome" id="R-MMU-997272">
    <property type="pathway name" value="Inhibition of voltage gated Ca2+ channels via Gbeta/gamma subunits"/>
</dbReference>
<dbReference type="BioGRID-ORCS" id="16521">
    <property type="hits" value="1 hit in 81 CRISPR screens"/>
</dbReference>
<dbReference type="PRO" id="PR:P48545"/>
<dbReference type="Proteomes" id="UP000000589">
    <property type="component" value="Chromosome 9"/>
</dbReference>
<dbReference type="RNAct" id="P48545">
    <property type="molecule type" value="protein"/>
</dbReference>
<dbReference type="Bgee" id="ENSMUSG00000032034">
    <property type="expression patterns" value="Expressed in cardiac atrium and 58 other cell types or tissues"/>
</dbReference>
<dbReference type="ExpressionAtlas" id="P48545">
    <property type="expression patterns" value="baseline and differential"/>
</dbReference>
<dbReference type="GO" id="GO:1990566">
    <property type="term" value="C:I(KACh) inward rectifier potassium channel complex"/>
    <property type="evidence" value="ECO:0000266"/>
    <property type="project" value="ComplexPortal"/>
</dbReference>
<dbReference type="GO" id="GO:1902937">
    <property type="term" value="C:inward rectifier potassium channel complex"/>
    <property type="evidence" value="ECO:0000314"/>
    <property type="project" value="UniProtKB"/>
</dbReference>
<dbReference type="GO" id="GO:0015467">
    <property type="term" value="F:G-protein activated inward rectifier potassium channel activity"/>
    <property type="evidence" value="ECO:0000250"/>
    <property type="project" value="UniProtKB"/>
</dbReference>
<dbReference type="GO" id="GO:0005242">
    <property type="term" value="F:inward rectifier potassium channel activity"/>
    <property type="evidence" value="ECO:0000250"/>
    <property type="project" value="UniProtKB"/>
</dbReference>
<dbReference type="GO" id="GO:0086089">
    <property type="term" value="F:voltage-gated potassium channel activity involved in atrial cardiac muscle cell action potential repolarization"/>
    <property type="evidence" value="ECO:0007669"/>
    <property type="project" value="Ensembl"/>
</dbReference>
<dbReference type="GO" id="GO:0098914">
    <property type="term" value="P:membrane repolarization during atrial cardiac muscle cell action potential"/>
    <property type="evidence" value="ECO:0007669"/>
    <property type="project" value="Ensembl"/>
</dbReference>
<dbReference type="GO" id="GO:1990573">
    <property type="term" value="P:potassium ion import across plasma membrane"/>
    <property type="evidence" value="ECO:0007669"/>
    <property type="project" value="Ensembl"/>
</dbReference>
<dbReference type="GO" id="GO:0071805">
    <property type="term" value="P:potassium ion transmembrane transport"/>
    <property type="evidence" value="ECO:0000303"/>
    <property type="project" value="ComplexPortal"/>
</dbReference>
<dbReference type="GO" id="GO:0086091">
    <property type="term" value="P:regulation of heart rate by cardiac conduction"/>
    <property type="evidence" value="ECO:0007669"/>
    <property type="project" value="Ensembl"/>
</dbReference>
<dbReference type="FunFam" id="1.10.287.70:FF:000019">
    <property type="entry name" value="G protein-activated inward rectifier potassium channel 1"/>
    <property type="match status" value="1"/>
</dbReference>
<dbReference type="FunFam" id="2.60.40.1400:FF:000005">
    <property type="entry name" value="G protein-activated inward rectifier potassium channel 2"/>
    <property type="match status" value="1"/>
</dbReference>
<dbReference type="Gene3D" id="1.10.287.70">
    <property type="match status" value="1"/>
</dbReference>
<dbReference type="Gene3D" id="2.60.40.1400">
    <property type="entry name" value="G protein-activated inward rectifier potassium channel 1"/>
    <property type="match status" value="1"/>
</dbReference>
<dbReference type="InterPro" id="IPR014756">
    <property type="entry name" value="Ig_E-set"/>
</dbReference>
<dbReference type="InterPro" id="IPR041647">
    <property type="entry name" value="IRK_C"/>
</dbReference>
<dbReference type="InterPro" id="IPR016449">
    <property type="entry name" value="K_chnl_inward-rec_Kir"/>
</dbReference>
<dbReference type="InterPro" id="IPR003277">
    <property type="entry name" value="K_chnl_inward-rec_Kir3.4"/>
</dbReference>
<dbReference type="InterPro" id="IPR013518">
    <property type="entry name" value="K_chnl_inward-rec_Kir_cyto"/>
</dbReference>
<dbReference type="InterPro" id="IPR040445">
    <property type="entry name" value="Kir_TM"/>
</dbReference>
<dbReference type="PANTHER" id="PTHR11767:SF52">
    <property type="entry name" value="G PROTEIN-ACTIVATED INWARD RECTIFIER POTASSIUM CHANNEL 4"/>
    <property type="match status" value="1"/>
</dbReference>
<dbReference type="PANTHER" id="PTHR11767">
    <property type="entry name" value="INWARD RECTIFIER POTASSIUM CHANNEL"/>
    <property type="match status" value="1"/>
</dbReference>
<dbReference type="Pfam" id="PF01007">
    <property type="entry name" value="IRK"/>
    <property type="match status" value="1"/>
</dbReference>
<dbReference type="Pfam" id="PF17655">
    <property type="entry name" value="IRK_C"/>
    <property type="match status" value="1"/>
</dbReference>
<dbReference type="PIRSF" id="PIRSF005465">
    <property type="entry name" value="GIRK_kir"/>
    <property type="match status" value="1"/>
</dbReference>
<dbReference type="PRINTS" id="PR01330">
    <property type="entry name" value="KIR34CHANNEL"/>
</dbReference>
<dbReference type="PRINTS" id="PR01320">
    <property type="entry name" value="KIRCHANNEL"/>
</dbReference>
<dbReference type="SUPFAM" id="SSF81296">
    <property type="entry name" value="E set domains"/>
    <property type="match status" value="1"/>
</dbReference>
<dbReference type="SUPFAM" id="SSF81324">
    <property type="entry name" value="Voltage-gated potassium channels"/>
    <property type="match status" value="1"/>
</dbReference>
<keyword id="KW-0407">Ion channel</keyword>
<keyword id="KW-0406">Ion transport</keyword>
<keyword id="KW-0472">Membrane</keyword>
<keyword id="KW-0597">Phosphoprotein</keyword>
<keyword id="KW-0630">Potassium</keyword>
<keyword id="KW-0633">Potassium transport</keyword>
<keyword id="KW-1185">Reference proteome</keyword>
<keyword id="KW-0812">Transmembrane</keyword>
<keyword id="KW-1133">Transmembrane helix</keyword>
<keyword id="KW-0813">Transport</keyword>
<keyword id="KW-0851">Voltage-gated channel</keyword>